<sequence>MSTVLVVGADKGIAHSISRQLHDRGEDVIAACLFDGADLAAAGITVEPGVDVTSQESVEALAARLSEKGVKLDAVFHVAGVMWLDEVGSLDYDLIRRQIEINTLGPLRTIEAVRPLLNEGAKVGIVTSRVGSLGDNTSGGMYSYRISKAAANMVGLNFHHDLSKDGVSVLLLHPGMVATDLTKDFPGEHSYITPEQAAAGLIKNIDNLTPETSGRFQHSDGTFLQW</sequence>
<evidence type="ECO:0000269" key="1">
    <source>
    </source>
</evidence>
<evidence type="ECO:0000269" key="2">
    <source>
    </source>
</evidence>
<evidence type="ECO:0000303" key="3">
    <source>
    </source>
</evidence>
<evidence type="ECO:0000305" key="4"/>
<evidence type="ECO:0000312" key="5">
    <source>
        <dbReference type="EMBL" id="KJF19167.1"/>
    </source>
</evidence>
<evidence type="ECO:0000312" key="6">
    <source>
        <dbReference type="Proteomes" id="UP000032323"/>
    </source>
</evidence>
<geneLocation type="plasmid" evidence="6">
    <name>unnamed</name>
</geneLocation>
<dbReference type="EC" id="1.1.1.398" evidence="1"/>
<dbReference type="EMBL" id="AJ249207">
    <property type="protein sequence ID" value="CAB55822.1"/>
    <property type="molecule type" value="Genomic_DNA"/>
</dbReference>
<dbReference type="EMBL" id="JYOP01000009">
    <property type="protein sequence ID" value="KJF19167.1"/>
    <property type="molecule type" value="Genomic_DNA"/>
</dbReference>
<dbReference type="RefSeq" id="WP_045063294.1">
    <property type="nucleotide sequence ID" value="NZ_CM003191.1"/>
</dbReference>
<dbReference type="SMR" id="Q9RBP5"/>
<dbReference type="KEGG" id="ag:CAB55822"/>
<dbReference type="PATRIC" id="fig|103808.5.peg.69"/>
<dbReference type="OrthoDB" id="9792003at2"/>
<dbReference type="BioCyc" id="MetaCyc:MONOMER-19833"/>
<dbReference type="Proteomes" id="UP000032323">
    <property type="component" value="Plasmid unnamed"/>
</dbReference>
<dbReference type="GO" id="GO:0016616">
    <property type="term" value="F:oxidoreductase activity, acting on the CH-OH group of donors, NAD or NADP as acceptor"/>
    <property type="evidence" value="ECO:0007669"/>
    <property type="project" value="TreeGrafter"/>
</dbReference>
<dbReference type="CDD" id="cd05325">
    <property type="entry name" value="carb_red_sniffer_like_SDR_c"/>
    <property type="match status" value="1"/>
</dbReference>
<dbReference type="Gene3D" id="3.40.50.720">
    <property type="entry name" value="NAD(P)-binding Rossmann-like Domain"/>
    <property type="match status" value="1"/>
</dbReference>
<dbReference type="InterPro" id="IPR036291">
    <property type="entry name" value="NAD(P)-bd_dom_sf"/>
</dbReference>
<dbReference type="InterPro" id="IPR052184">
    <property type="entry name" value="SDR_enzymes"/>
</dbReference>
<dbReference type="InterPro" id="IPR002347">
    <property type="entry name" value="SDR_fam"/>
</dbReference>
<dbReference type="PANTHER" id="PTHR45458:SF1">
    <property type="entry name" value="SHORT CHAIN DEHYDROGENASE"/>
    <property type="match status" value="1"/>
</dbReference>
<dbReference type="PANTHER" id="PTHR45458">
    <property type="entry name" value="SHORT-CHAIN DEHYDROGENASE/REDUCTASE SDR"/>
    <property type="match status" value="1"/>
</dbReference>
<dbReference type="Pfam" id="PF00106">
    <property type="entry name" value="adh_short"/>
    <property type="match status" value="1"/>
</dbReference>
<dbReference type="PRINTS" id="PR00081">
    <property type="entry name" value="GDHRDH"/>
</dbReference>
<dbReference type="SUPFAM" id="SSF51735">
    <property type="entry name" value="NAD(P)-binding Rossmann-fold domains"/>
    <property type="match status" value="1"/>
</dbReference>
<accession>Q9RBP5</accession>
<organism>
    <name type="scientific">Rhodococcus sp. (strain AD45)</name>
    <dbReference type="NCBI Taxonomy" id="103808"/>
    <lineage>
        <taxon>Bacteria</taxon>
        <taxon>Bacillati</taxon>
        <taxon>Actinomycetota</taxon>
        <taxon>Actinomycetes</taxon>
        <taxon>Mycobacteriales</taxon>
        <taxon>Nocardiaceae</taxon>
        <taxon>Rhodococcus</taxon>
    </lineage>
</organism>
<keyword id="KW-0903">Direct protein sequencing</keyword>
<keyword id="KW-0520">NAD</keyword>
<keyword id="KW-0560">Oxidoreductase</keyword>
<keyword id="KW-0614">Plasmid</keyword>
<keyword id="KW-1185">Reference proteome</keyword>
<comment type="function">
    <text evidence="1 2">Involved in isoprene degradation (PubMed:10094686, PubMed:10715003). Catalyzes the two-step NAD(+)-dependent oxidation of 2-glutathionyl-2-methylbut-3-en-1-ol (HGMB) to 2-glutathionyl-2-methylbut-3-enoate (GMBA) (PubMed:10094686).</text>
</comment>
<comment type="catalytic activity">
    <reaction evidence="1">
        <text>2-glutathionyl-2-methylbut-3-en-1-ol + 2 NAD(+) + H2O = 2-glutathionyl-2-methylbut-3-enoate + 2 NADH + 3 H(+)</text>
        <dbReference type="Rhea" id="RHEA:12156"/>
        <dbReference type="ChEBI" id="CHEBI:15377"/>
        <dbReference type="ChEBI" id="CHEBI:15378"/>
        <dbReference type="ChEBI" id="CHEBI:57540"/>
        <dbReference type="ChEBI" id="CHEBI:57945"/>
        <dbReference type="ChEBI" id="CHEBI:131718"/>
        <dbReference type="ChEBI" id="CHEBI:131797"/>
        <dbReference type="EC" id="1.1.1.398"/>
    </reaction>
</comment>
<comment type="catalytic activity">
    <reaction evidence="1">
        <text>2-glutathionyl-2-methylbut-3-en-1-ol + NAD(+) = 2-glutathionyl-2-methylbut-3-enal + NADH + H(+)</text>
        <dbReference type="Rhea" id="RHEA:49604"/>
        <dbReference type="ChEBI" id="CHEBI:15378"/>
        <dbReference type="ChEBI" id="CHEBI:57540"/>
        <dbReference type="ChEBI" id="CHEBI:57945"/>
        <dbReference type="ChEBI" id="CHEBI:131718"/>
        <dbReference type="ChEBI" id="CHEBI:131798"/>
    </reaction>
</comment>
<comment type="catalytic activity">
    <reaction evidence="1">
        <text>2-glutathionyl-2-methylbut-3-enal + NAD(+) + H2O = 2-glutathionyl-2-methylbut-3-enoate + NADH + 2 H(+)</text>
        <dbReference type="Rhea" id="RHEA:49608"/>
        <dbReference type="ChEBI" id="CHEBI:15377"/>
        <dbReference type="ChEBI" id="CHEBI:15378"/>
        <dbReference type="ChEBI" id="CHEBI:57540"/>
        <dbReference type="ChEBI" id="CHEBI:57945"/>
        <dbReference type="ChEBI" id="CHEBI:131797"/>
        <dbReference type="ChEBI" id="CHEBI:131798"/>
    </reaction>
</comment>
<comment type="biophysicochemical properties">
    <kinetics>
        <KM evidence="1">0.07 mM for NAD(+)</KM>
        <KM evidence="1">1.4 mM for 2-glutathionyl-2-methylbut-3-en-1-ol</KM>
        <Vmax evidence="1">18.0 umol/min/mg enzyme</Vmax>
    </kinetics>
    <phDependence>
        <text evidence="1">Optimum pH is 9.0-10.</text>
    </phDependence>
</comment>
<comment type="similarity">
    <text evidence="4">Belongs to the short-chain dehydrogenases/reductases (SDR) family.</text>
</comment>
<proteinExistence type="evidence at protein level"/>
<feature type="initiator methionine" description="Removed" evidence="1">
    <location>
        <position position="1"/>
    </location>
</feature>
<feature type="chain" id="PRO_0000449974" description="1-hydroxy-2-glutathionyl-2-methyl-3-butene dehydrogenase">
    <location>
        <begin position="2"/>
        <end position="226"/>
    </location>
</feature>
<feature type="sequence conflict" description="In Ref. 3; AA sequence." evidence="4" ref="3">
    <original>R</original>
    <variation>D</variation>
    <location>
        <position position="24"/>
    </location>
</feature>
<reference key="1">
    <citation type="journal article" date="2000" name="J. Bacteriol.">
        <title>Characterization of the gene cluster involved in isoprene metabolism in Rhodococcus sp. strain AD45.</title>
        <authorList>
            <person name="van Hylckama Vlieg J.E."/>
            <person name="Leemhuis H."/>
            <person name="Spelberg J.H."/>
            <person name="Janssen D.B."/>
        </authorList>
    </citation>
    <scope>NUCLEOTIDE SEQUENCE [GENOMIC DNA]</scope>
    <scope>FUNCTION</scope>
    <source>
        <strain>AD45</strain>
    </source>
</reference>
<reference key="2">
    <citation type="journal article" date="2015" name="Environ. Microbiol.">
        <title>Regulation of plasmid-encoded isoprene metabolism in Rhodococcus, a representative of an important link in the global isoprene cycle.</title>
        <authorList>
            <person name="Crombie A.T."/>
            <person name="Khawand M.E."/>
            <person name="Rhodius V.A."/>
            <person name="Fengler K.A."/>
            <person name="Miller M.C."/>
            <person name="Whited G.M."/>
            <person name="McGenity T.J."/>
            <person name="Murrell J.C."/>
        </authorList>
    </citation>
    <scope>NUCLEOTIDE SEQUENCE [LARGE SCALE GENOMIC DNA]</scope>
    <source>
        <strain>AD45</strain>
        <plasmid>unnamed</plasmid>
    </source>
</reference>
<reference key="3">
    <citation type="journal article" date="1999" name="J. Bacteriol.">
        <title>Purification of a glutathione S-transferase and a glutathione conjugate-specific dehydrogenase involved in isoprene metabolism in Rhodococcus sp. strain AD45.</title>
        <authorList>
            <person name="van Hylckama Vlieg J.E."/>
            <person name="Kingma J."/>
            <person name="Kruizinga W."/>
            <person name="Janssen D.B."/>
        </authorList>
    </citation>
    <scope>PROTEIN SEQUENCE OF 2-24</scope>
    <scope>FUNCTION</scope>
    <scope>CATALYTIC ACTIVITY</scope>
    <scope>BIOPHYSICOCHEMICAL PROPERTIES</scope>
    <source>
        <strain>AD45</strain>
    </source>
</reference>
<protein>
    <recommendedName>
        <fullName evidence="4">1-hydroxy-2-glutathionyl-2-methyl-3-butene dehydrogenase</fullName>
        <ecNumber evidence="1">1.1.1.398</ecNumber>
    </recommendedName>
</protein>
<name>ISOH_RHOSX</name>
<gene>
    <name evidence="3" type="primary">isoH</name>
    <name evidence="5" type="ORF">SZ00_06094</name>
</gene>